<keyword id="KW-0315">Glutamine amidotransferase</keyword>
<keyword id="KW-0378">Hydrolase</keyword>
<keyword id="KW-0456">Lyase</keyword>
<keyword id="KW-0663">Pyridoxal phosphate</keyword>
<accession>Q8PUA4</accession>
<gene>
    <name evidence="1" type="primary">pdxT</name>
    <name type="ordered locus">MM_2433</name>
</gene>
<organism>
    <name type="scientific">Methanosarcina mazei (strain ATCC BAA-159 / DSM 3647 / Goe1 / Go1 / JCM 11833 / OCM 88)</name>
    <name type="common">Methanosarcina frisia</name>
    <dbReference type="NCBI Taxonomy" id="192952"/>
    <lineage>
        <taxon>Archaea</taxon>
        <taxon>Methanobacteriati</taxon>
        <taxon>Methanobacteriota</taxon>
        <taxon>Stenosarchaea group</taxon>
        <taxon>Methanomicrobia</taxon>
        <taxon>Methanosarcinales</taxon>
        <taxon>Methanosarcinaceae</taxon>
        <taxon>Methanosarcina</taxon>
    </lineage>
</organism>
<proteinExistence type="inferred from homology"/>
<evidence type="ECO:0000255" key="1">
    <source>
        <dbReference type="HAMAP-Rule" id="MF_01615"/>
    </source>
</evidence>
<evidence type="ECO:0000305" key="2"/>
<reference key="1">
    <citation type="journal article" date="2002" name="J. Mol. Microbiol. Biotechnol.">
        <title>The genome of Methanosarcina mazei: evidence for lateral gene transfer between Bacteria and Archaea.</title>
        <authorList>
            <person name="Deppenmeier U."/>
            <person name="Johann A."/>
            <person name="Hartsch T."/>
            <person name="Merkl R."/>
            <person name="Schmitz R.A."/>
            <person name="Martinez-Arias R."/>
            <person name="Henne A."/>
            <person name="Wiezer A."/>
            <person name="Baeumer S."/>
            <person name="Jacobi C."/>
            <person name="Brueggemann H."/>
            <person name="Lienard T."/>
            <person name="Christmann A."/>
            <person name="Boemecke M."/>
            <person name="Steckel S."/>
            <person name="Bhattacharyya A."/>
            <person name="Lykidis A."/>
            <person name="Overbeek R."/>
            <person name="Klenk H.-P."/>
            <person name="Gunsalus R.P."/>
            <person name="Fritz H.-J."/>
            <person name="Gottschalk G."/>
        </authorList>
    </citation>
    <scope>NUCLEOTIDE SEQUENCE [LARGE SCALE GENOMIC DNA]</scope>
    <source>
        <strain>ATCC BAA-159 / DSM 3647 / Goe1 / Go1 / JCM 11833 / OCM 88</strain>
    </source>
</reference>
<name>PDXT_METMA</name>
<protein>
    <recommendedName>
        <fullName evidence="1">Pyridoxal 5'-phosphate synthase subunit PdxT</fullName>
        <ecNumber evidence="1">4.3.3.6</ecNumber>
    </recommendedName>
    <alternativeName>
        <fullName evidence="1">Pdx2</fullName>
    </alternativeName>
    <alternativeName>
        <fullName evidence="1">Pyridoxal 5'-phosphate synthase glutaminase subunit</fullName>
        <ecNumber evidence="1">3.5.1.2</ecNumber>
    </alternativeName>
</protein>
<feature type="chain" id="PRO_0000135682" description="Pyridoxal 5'-phosphate synthase subunit PdxT">
    <location>
        <begin position="1"/>
        <end position="199"/>
    </location>
</feature>
<feature type="active site" description="Nucleophile" evidence="1">
    <location>
        <position position="84"/>
    </location>
</feature>
<feature type="active site" description="Charge relay system" evidence="1">
    <location>
        <position position="179"/>
    </location>
</feature>
<feature type="active site" description="Charge relay system" evidence="1">
    <location>
        <position position="181"/>
    </location>
</feature>
<feature type="binding site" evidence="1">
    <location>
        <begin position="52"/>
        <end position="54"/>
    </location>
    <ligand>
        <name>L-glutamine</name>
        <dbReference type="ChEBI" id="CHEBI:58359"/>
    </ligand>
</feature>
<feature type="binding site" evidence="1">
    <location>
        <position position="115"/>
    </location>
    <ligand>
        <name>L-glutamine</name>
        <dbReference type="ChEBI" id="CHEBI:58359"/>
    </ligand>
</feature>
<feature type="binding site" evidence="1">
    <location>
        <begin position="143"/>
        <end position="144"/>
    </location>
    <ligand>
        <name>L-glutamine</name>
        <dbReference type="ChEBI" id="CHEBI:58359"/>
    </ligand>
</feature>
<comment type="function">
    <text evidence="1">Catalyzes the hydrolysis of glutamine to glutamate and ammonia as part of the biosynthesis of pyridoxal 5'-phosphate. The resulting ammonia molecule is channeled to the active site of PdxS.</text>
</comment>
<comment type="catalytic activity">
    <reaction evidence="1">
        <text>aldehydo-D-ribose 5-phosphate + D-glyceraldehyde 3-phosphate + L-glutamine = pyridoxal 5'-phosphate + L-glutamate + phosphate + 3 H2O + H(+)</text>
        <dbReference type="Rhea" id="RHEA:31507"/>
        <dbReference type="ChEBI" id="CHEBI:15377"/>
        <dbReference type="ChEBI" id="CHEBI:15378"/>
        <dbReference type="ChEBI" id="CHEBI:29985"/>
        <dbReference type="ChEBI" id="CHEBI:43474"/>
        <dbReference type="ChEBI" id="CHEBI:58273"/>
        <dbReference type="ChEBI" id="CHEBI:58359"/>
        <dbReference type="ChEBI" id="CHEBI:59776"/>
        <dbReference type="ChEBI" id="CHEBI:597326"/>
        <dbReference type="EC" id="4.3.3.6"/>
    </reaction>
</comment>
<comment type="catalytic activity">
    <reaction evidence="1">
        <text>L-glutamine + H2O = L-glutamate + NH4(+)</text>
        <dbReference type="Rhea" id="RHEA:15889"/>
        <dbReference type="ChEBI" id="CHEBI:15377"/>
        <dbReference type="ChEBI" id="CHEBI:28938"/>
        <dbReference type="ChEBI" id="CHEBI:29985"/>
        <dbReference type="ChEBI" id="CHEBI:58359"/>
        <dbReference type="EC" id="3.5.1.2"/>
    </reaction>
</comment>
<comment type="pathway">
    <text evidence="1">Cofactor biosynthesis; pyridoxal 5'-phosphate biosynthesis.</text>
</comment>
<comment type="subunit">
    <text evidence="1">In the presence of PdxS, forms a dodecamer of heterodimers. Only shows activity in the heterodimer.</text>
</comment>
<comment type="similarity">
    <text evidence="1">Belongs to the glutaminase PdxT/SNO family.</text>
</comment>
<comment type="sequence caution" evidence="2">
    <conflict type="erroneous initiation">
        <sequence resource="EMBL-CDS" id="AAM32129"/>
    </conflict>
</comment>
<dbReference type="EC" id="4.3.3.6" evidence="1"/>
<dbReference type="EC" id="3.5.1.2" evidence="1"/>
<dbReference type="EMBL" id="AE008384">
    <property type="protein sequence ID" value="AAM32129.1"/>
    <property type="status" value="ALT_INIT"/>
    <property type="molecule type" value="Genomic_DNA"/>
</dbReference>
<dbReference type="RefSeq" id="WP_011034355.1">
    <property type="nucleotide sequence ID" value="NC_003901.1"/>
</dbReference>
<dbReference type="SMR" id="Q8PUA4"/>
<dbReference type="MEROPS" id="C26.A32"/>
<dbReference type="GeneID" id="82161510"/>
<dbReference type="KEGG" id="mma:MM_2433"/>
<dbReference type="PATRIC" id="fig|192952.21.peg.2785"/>
<dbReference type="eggNOG" id="arCOG00034">
    <property type="taxonomic scope" value="Archaea"/>
</dbReference>
<dbReference type="HOGENOM" id="CLU_069674_2_0_2"/>
<dbReference type="UniPathway" id="UPA00245"/>
<dbReference type="Proteomes" id="UP000000595">
    <property type="component" value="Chromosome"/>
</dbReference>
<dbReference type="GO" id="GO:0005829">
    <property type="term" value="C:cytosol"/>
    <property type="evidence" value="ECO:0007669"/>
    <property type="project" value="TreeGrafter"/>
</dbReference>
<dbReference type="GO" id="GO:1903600">
    <property type="term" value="C:glutaminase complex"/>
    <property type="evidence" value="ECO:0007669"/>
    <property type="project" value="TreeGrafter"/>
</dbReference>
<dbReference type="GO" id="GO:0004359">
    <property type="term" value="F:glutaminase activity"/>
    <property type="evidence" value="ECO:0007669"/>
    <property type="project" value="UniProtKB-UniRule"/>
</dbReference>
<dbReference type="GO" id="GO:0036381">
    <property type="term" value="F:pyridoxal 5'-phosphate synthase (glutamine hydrolysing) activity"/>
    <property type="evidence" value="ECO:0007669"/>
    <property type="project" value="UniProtKB-UniRule"/>
</dbReference>
<dbReference type="GO" id="GO:0006543">
    <property type="term" value="P:glutamine catabolic process"/>
    <property type="evidence" value="ECO:0007669"/>
    <property type="project" value="UniProtKB-UniRule"/>
</dbReference>
<dbReference type="GO" id="GO:0042823">
    <property type="term" value="P:pyridoxal phosphate biosynthetic process"/>
    <property type="evidence" value="ECO:0007669"/>
    <property type="project" value="UniProtKB-UniRule"/>
</dbReference>
<dbReference type="GO" id="GO:0008614">
    <property type="term" value="P:pyridoxine metabolic process"/>
    <property type="evidence" value="ECO:0007669"/>
    <property type="project" value="TreeGrafter"/>
</dbReference>
<dbReference type="CDD" id="cd01749">
    <property type="entry name" value="GATase1_PB"/>
    <property type="match status" value="1"/>
</dbReference>
<dbReference type="FunFam" id="3.40.50.880:FF:000041">
    <property type="entry name" value="Glutamine amidotransferase subunit pdxT, putative"/>
    <property type="match status" value="1"/>
</dbReference>
<dbReference type="Gene3D" id="3.40.50.880">
    <property type="match status" value="1"/>
</dbReference>
<dbReference type="HAMAP" id="MF_01615">
    <property type="entry name" value="PdxT"/>
    <property type="match status" value="1"/>
</dbReference>
<dbReference type="InterPro" id="IPR029062">
    <property type="entry name" value="Class_I_gatase-like"/>
</dbReference>
<dbReference type="InterPro" id="IPR002161">
    <property type="entry name" value="PdxT/SNO"/>
</dbReference>
<dbReference type="InterPro" id="IPR021196">
    <property type="entry name" value="PdxT/SNO_CS"/>
</dbReference>
<dbReference type="NCBIfam" id="TIGR03800">
    <property type="entry name" value="PLP_synth_Pdx2"/>
    <property type="match status" value="1"/>
</dbReference>
<dbReference type="PANTHER" id="PTHR31559">
    <property type="entry name" value="PYRIDOXAL 5'-PHOSPHATE SYNTHASE SUBUNIT SNO"/>
    <property type="match status" value="1"/>
</dbReference>
<dbReference type="PANTHER" id="PTHR31559:SF0">
    <property type="entry name" value="PYRIDOXAL 5'-PHOSPHATE SYNTHASE SUBUNIT SNO1-RELATED"/>
    <property type="match status" value="1"/>
</dbReference>
<dbReference type="Pfam" id="PF01174">
    <property type="entry name" value="SNO"/>
    <property type="match status" value="1"/>
</dbReference>
<dbReference type="PIRSF" id="PIRSF005639">
    <property type="entry name" value="Glut_amidoT_SNO"/>
    <property type="match status" value="1"/>
</dbReference>
<dbReference type="SUPFAM" id="SSF52317">
    <property type="entry name" value="Class I glutamine amidotransferase-like"/>
    <property type="match status" value="1"/>
</dbReference>
<dbReference type="PROSITE" id="PS01236">
    <property type="entry name" value="PDXT_SNO_1"/>
    <property type="match status" value="1"/>
</dbReference>
<dbReference type="PROSITE" id="PS51130">
    <property type="entry name" value="PDXT_SNO_2"/>
    <property type="match status" value="1"/>
</dbReference>
<sequence>MKIGVIAIQGAVSEHVDALRRALKERGVEAEVVEIKHKGIVPECSGIVIPGGESTTLCRLLAREGIAEEIKEAAAKGVPILGTCAGLIVIAKEGDRQVEKTGQELLGIMDTRVNRNAFGRQRDSFEAELEVFILDSPFTGVFIRAPGIVSCGPGVKVLSRLEGMIVAAEQGNVLALAFHPELTDDLRIHQYFLDKVLNC</sequence>